<gene>
    <name evidence="3" type="primary">MES19</name>
    <name evidence="5" type="ordered locus">At2g23570</name>
    <name evidence="6" type="ORF">F26B6.22</name>
</gene>
<dbReference type="EC" id="3.1.1.-" evidence="2"/>
<dbReference type="EMBL" id="AC003040">
    <property type="protein sequence ID" value="AAC23770.1"/>
    <property type="status" value="ALT_SEQ"/>
    <property type="molecule type" value="Genomic_DNA"/>
</dbReference>
<dbReference type="EMBL" id="CP002685">
    <property type="status" value="NOT_ANNOTATED_CDS"/>
    <property type="molecule type" value="Genomic_DNA"/>
</dbReference>
<dbReference type="EMBL" id="DQ056539">
    <property type="protein sequence ID" value="AAY78691.1"/>
    <property type="molecule type" value="mRNA"/>
</dbReference>
<dbReference type="PIR" id="T01146">
    <property type="entry name" value="T01146"/>
</dbReference>
<dbReference type="RefSeq" id="NP_001318275.1">
    <property type="nucleotide sequence ID" value="NM_001335855.1"/>
</dbReference>
<dbReference type="SMR" id="F4IMK4"/>
<dbReference type="ESTHER" id="arath-MES19">
    <property type="family name" value="Hydroxynitrile_lyase"/>
</dbReference>
<dbReference type="PaxDb" id="3702-AT2G23570.1"/>
<dbReference type="GeneID" id="816889"/>
<dbReference type="KEGG" id="ath:AT2G23570"/>
<dbReference type="Araport" id="AT2G23570"/>
<dbReference type="TAIR" id="AT2G23570"/>
<dbReference type="InParanoid" id="F4IMK4"/>
<dbReference type="PRO" id="PR:F4IMK4"/>
<dbReference type="Proteomes" id="UP000006548">
    <property type="component" value="Chromosome 2"/>
</dbReference>
<dbReference type="ExpressionAtlas" id="F4IMK4">
    <property type="expression patterns" value="baseline and differential"/>
</dbReference>
<dbReference type="GO" id="GO:0080030">
    <property type="term" value="F:methyl indole-3-acetate esterase activity"/>
    <property type="evidence" value="ECO:0000318"/>
    <property type="project" value="GO_Central"/>
</dbReference>
<dbReference type="GO" id="GO:0080032">
    <property type="term" value="F:methyl jasmonate esterase activity"/>
    <property type="evidence" value="ECO:0000318"/>
    <property type="project" value="GO_Central"/>
</dbReference>
<dbReference type="GO" id="GO:0080031">
    <property type="term" value="F:methyl salicylate esterase activity"/>
    <property type="evidence" value="ECO:0000318"/>
    <property type="project" value="GO_Central"/>
</dbReference>
<dbReference type="GO" id="GO:0009694">
    <property type="term" value="P:jasmonic acid metabolic process"/>
    <property type="evidence" value="ECO:0000318"/>
    <property type="project" value="GO_Central"/>
</dbReference>
<dbReference type="GO" id="GO:0009696">
    <property type="term" value="P:salicylic acid metabolic process"/>
    <property type="evidence" value="ECO:0000318"/>
    <property type="project" value="GO_Central"/>
</dbReference>
<dbReference type="FunFam" id="3.40.50.1820:FF:000051">
    <property type="entry name" value="(S)-hydroxynitrile lyase"/>
    <property type="match status" value="1"/>
</dbReference>
<dbReference type="Gene3D" id="3.40.50.1820">
    <property type="entry name" value="alpha/beta hydrolase"/>
    <property type="match status" value="1"/>
</dbReference>
<dbReference type="InterPro" id="IPR000073">
    <property type="entry name" value="AB_hydrolase_1"/>
</dbReference>
<dbReference type="InterPro" id="IPR029058">
    <property type="entry name" value="AB_hydrolase_fold"/>
</dbReference>
<dbReference type="InterPro" id="IPR045889">
    <property type="entry name" value="MES/HNL"/>
</dbReference>
<dbReference type="PANTHER" id="PTHR10992:SF1020">
    <property type="entry name" value="METHYLESTERASE 19-RELATED"/>
    <property type="match status" value="1"/>
</dbReference>
<dbReference type="PANTHER" id="PTHR10992">
    <property type="entry name" value="METHYLESTERASE FAMILY MEMBER"/>
    <property type="match status" value="1"/>
</dbReference>
<dbReference type="Pfam" id="PF12697">
    <property type="entry name" value="Abhydrolase_6"/>
    <property type="match status" value="1"/>
</dbReference>
<dbReference type="SUPFAM" id="SSF53474">
    <property type="entry name" value="alpha/beta-Hydrolases"/>
    <property type="match status" value="1"/>
</dbReference>
<keyword id="KW-0378">Hydrolase</keyword>
<keyword id="KW-1185">Reference proteome</keyword>
<protein>
    <recommendedName>
        <fullName evidence="3">Putative methylesterase 19</fullName>
        <shortName evidence="3">AtMES19</shortName>
        <ecNumber evidence="2">3.1.1.-</ecNumber>
    </recommendedName>
</protein>
<name>MES19_ARATH</name>
<evidence type="ECO:0000250" key="1">
    <source>
        <dbReference type="UniProtKB" id="Q6RYA0"/>
    </source>
</evidence>
<evidence type="ECO:0000250" key="2">
    <source>
        <dbReference type="UniProtKB" id="Q9SG92"/>
    </source>
</evidence>
<evidence type="ECO:0000303" key="3">
    <source>
    </source>
</evidence>
<evidence type="ECO:0000305" key="4"/>
<evidence type="ECO:0000312" key="5">
    <source>
        <dbReference type="Araport" id="AT2G23570"/>
    </source>
</evidence>
<evidence type="ECO:0000312" key="6">
    <source>
        <dbReference type="EMBL" id="AAC23770.1"/>
    </source>
</evidence>
<accession>F4IMK4</accession>
<accession>O80473</accession>
<organism>
    <name type="scientific">Arabidopsis thaliana</name>
    <name type="common">Mouse-ear cress</name>
    <dbReference type="NCBI Taxonomy" id="3702"/>
    <lineage>
        <taxon>Eukaryota</taxon>
        <taxon>Viridiplantae</taxon>
        <taxon>Streptophyta</taxon>
        <taxon>Embryophyta</taxon>
        <taxon>Tracheophyta</taxon>
        <taxon>Spermatophyta</taxon>
        <taxon>Magnoliopsida</taxon>
        <taxon>eudicotyledons</taxon>
        <taxon>Gunneridae</taxon>
        <taxon>Pentapetalae</taxon>
        <taxon>rosids</taxon>
        <taxon>malvids</taxon>
        <taxon>Brassicales</taxon>
        <taxon>Brassicaceae</taxon>
        <taxon>Camelineae</taxon>
        <taxon>Arabidopsis</taxon>
    </lineage>
</organism>
<feature type="chain" id="PRO_0000418191" description="Putative methylesterase 19">
    <location>
        <begin position="1"/>
        <end position="260"/>
    </location>
</feature>
<feature type="active site" description="Acyl-ester intermediate" evidence="1">
    <location>
        <position position="81"/>
    </location>
</feature>
<feature type="active site" description="Charge relay system" evidence="1">
    <location>
        <position position="210"/>
    </location>
</feature>
<feature type="active site" description="Charge relay system" evidence="1">
    <location>
        <position position="238"/>
    </location>
</feature>
<proteinExistence type="evidence at transcript level"/>
<reference key="1">
    <citation type="journal article" date="1999" name="Nature">
        <title>Sequence and analysis of chromosome 2 of the plant Arabidopsis thaliana.</title>
        <authorList>
            <person name="Lin X."/>
            <person name="Kaul S."/>
            <person name="Rounsley S.D."/>
            <person name="Shea T.P."/>
            <person name="Benito M.-I."/>
            <person name="Town C.D."/>
            <person name="Fujii C.Y."/>
            <person name="Mason T.M."/>
            <person name="Bowman C.L."/>
            <person name="Barnstead M.E."/>
            <person name="Feldblyum T.V."/>
            <person name="Buell C.R."/>
            <person name="Ketchum K.A."/>
            <person name="Lee J.J."/>
            <person name="Ronning C.M."/>
            <person name="Koo H.L."/>
            <person name="Moffat K.S."/>
            <person name="Cronin L.A."/>
            <person name="Shen M."/>
            <person name="Pai G."/>
            <person name="Van Aken S."/>
            <person name="Umayam L."/>
            <person name="Tallon L.J."/>
            <person name="Gill J.E."/>
            <person name="Adams M.D."/>
            <person name="Carrera A.J."/>
            <person name="Creasy T.H."/>
            <person name="Goodman H.M."/>
            <person name="Somerville C.R."/>
            <person name="Copenhaver G.P."/>
            <person name="Preuss D."/>
            <person name="Nierman W.C."/>
            <person name="White O."/>
            <person name="Eisen J.A."/>
            <person name="Salzberg S.L."/>
            <person name="Fraser C.M."/>
            <person name="Venter J.C."/>
        </authorList>
    </citation>
    <scope>NUCLEOTIDE SEQUENCE [LARGE SCALE GENOMIC DNA]</scope>
    <source>
        <strain>cv. Columbia</strain>
    </source>
</reference>
<reference key="2">
    <citation type="journal article" date="2017" name="Plant J.">
        <title>Araport11: a complete reannotation of the Arabidopsis thaliana reference genome.</title>
        <authorList>
            <person name="Cheng C.Y."/>
            <person name="Krishnakumar V."/>
            <person name="Chan A.P."/>
            <person name="Thibaud-Nissen F."/>
            <person name="Schobel S."/>
            <person name="Town C.D."/>
        </authorList>
    </citation>
    <scope>GENOME REANNOTATION</scope>
    <source>
        <strain>cv. Columbia</strain>
    </source>
</reference>
<reference key="3">
    <citation type="submission" date="2005-05" db="EMBL/GenBank/DDBJ databases">
        <authorList>
            <person name="Underwood B.A."/>
            <person name="Xiao Y.-L."/>
            <person name="Moskal W.A. Jr."/>
            <person name="Monaghan E.L."/>
            <person name="Wang W."/>
            <person name="Redman J.C."/>
            <person name="Wu H.C."/>
            <person name="Utterback T."/>
            <person name="Town C.D."/>
        </authorList>
    </citation>
    <scope>NUCLEOTIDE SEQUENCE [LARGE SCALE MRNA] OF 82-260</scope>
    <source>
        <strain>cv. Columbia</strain>
    </source>
</reference>
<reference key="4">
    <citation type="journal article" date="2008" name="Plant Physiol.">
        <title>Inactive methyl indole-3-acetic acid ester can be hydrolyzed and activated by several esterases belonging to the AtMES esterase family of Arabidopsis.</title>
        <authorList>
            <person name="Yang Y."/>
            <person name="Xu R."/>
            <person name="Ma C.J."/>
            <person name="Vlot A.C."/>
            <person name="Klessig D.F."/>
            <person name="Pichersky E."/>
        </authorList>
    </citation>
    <scope>GENE FAMILY</scope>
</reference>
<comment type="function">
    <text>Putative methylesterase.</text>
</comment>
<comment type="similarity">
    <text evidence="4">Belongs to the AB hydrolase superfamily. Methylesterase family.</text>
</comment>
<comment type="sequence caution" evidence="4">
    <conflict type="erroneous gene model prediction">
        <sequence resource="EMBL-CDS" id="AAC23770"/>
    </conflict>
</comment>
<comment type="sequence caution" evidence="4">
    <conflict type="erroneous termination">
        <sequence resource="EMBL-CDS" id="AAC23770"/>
    </conflict>
    <text>Truncated C-terminus.</text>
</comment>
<sequence>MEKKRFVLVHAVCHGAWSWYKVKTKLEAAGHCVTAVDLAASGINMTIVEEIQTLMDYSKPLLNFMSSLGSDDDKVILVAHSMGGIPAALAADIFSCKISAVVFLAAFMPDTRNPPAYVFEKLIRSIPREEWLDTAFGRYGNPDCPLESALLGPKFMAKKVYQRSPIEDLELAKMLVRVNPLVTNNLAGARSFTGEGYGSVTRIYIISGEDNILPEDYQRWMIRNFPVKEVMEIKDADHMAMFSKPKELCALLLEIADKYA</sequence>